<sequence length="219" mass="25308">MGSAFVFLEASLELIPQKIRGHPAVRADAIRRGKRPEKILLDDSKHHTAMKSLEFREKRGRPDIVHQCLLLLLDSPLRDFEVYVHTLNGEIIWVNRETRLPRNYNRFVGLMEKLFEERRITAGDTTLIEFKDVGLRDIVRGRDVLLFREKGGRFEFSELLDGDVAVCIGAFPHGDFFEETLRELGEFKEVSLGTESYTSLYVTSRVLCEYERVRAHKVG</sequence>
<keyword id="KW-0002">3D-structure</keyword>
<keyword id="KW-0489">Methyltransferase</keyword>
<keyword id="KW-1185">Reference proteome</keyword>
<keyword id="KW-0690">Ribosome biogenesis</keyword>
<keyword id="KW-0694">RNA-binding</keyword>
<keyword id="KW-0698">rRNA processing</keyword>
<keyword id="KW-0699">rRNA-binding</keyword>
<keyword id="KW-0949">S-adenosyl-L-methionine</keyword>
<keyword id="KW-0808">Transferase</keyword>
<comment type="function">
    <text evidence="1">Methyltransferase involved in ribosomal biogenesis. Specifically catalyzes the N1-methylation of the pseudouridine corresponding to position 914 in M.jannaschii 16S rRNA.</text>
</comment>
<comment type="catalytic activity">
    <reaction evidence="1">
        <text>a pseudouridine in rRNA + S-adenosyl-L-methionine = an N(1)-methylpseudouridine in rRNA + S-adenosyl-L-homocysteine + H(+)</text>
        <dbReference type="Rhea" id="RHEA:46696"/>
        <dbReference type="Rhea" id="RHEA-COMP:11634"/>
        <dbReference type="Rhea" id="RHEA-COMP:13933"/>
        <dbReference type="ChEBI" id="CHEBI:15378"/>
        <dbReference type="ChEBI" id="CHEBI:57856"/>
        <dbReference type="ChEBI" id="CHEBI:59789"/>
        <dbReference type="ChEBI" id="CHEBI:65314"/>
        <dbReference type="ChEBI" id="CHEBI:74890"/>
    </reaction>
</comment>
<comment type="subunit">
    <text evidence="1">Homodimer.</text>
</comment>
<comment type="similarity">
    <text evidence="2">Belongs to the class IV-like SAM-binding methyltransferase superfamily. RNA methyltransferase NEP1 family.</text>
</comment>
<gene>
    <name type="primary">nep1</name>
    <name type="ordered locus">AF_0734</name>
</gene>
<reference key="1">
    <citation type="journal article" date="1997" name="Nature">
        <title>The complete genome sequence of the hyperthermophilic, sulphate-reducing archaeon Archaeoglobus fulgidus.</title>
        <authorList>
            <person name="Klenk H.-P."/>
            <person name="Clayton R.A."/>
            <person name="Tomb J.-F."/>
            <person name="White O."/>
            <person name="Nelson K.E."/>
            <person name="Ketchum K.A."/>
            <person name="Dodson R.J."/>
            <person name="Gwinn M.L."/>
            <person name="Hickey E.K."/>
            <person name="Peterson J.D."/>
            <person name="Richardson D.L."/>
            <person name="Kerlavage A.R."/>
            <person name="Graham D.E."/>
            <person name="Kyrpides N.C."/>
            <person name="Fleischmann R.D."/>
            <person name="Quackenbush J."/>
            <person name="Lee N.H."/>
            <person name="Sutton G.G."/>
            <person name="Gill S.R."/>
            <person name="Kirkness E.F."/>
            <person name="Dougherty B.A."/>
            <person name="McKenney K."/>
            <person name="Adams M.D."/>
            <person name="Loftus B.J."/>
            <person name="Peterson S.N."/>
            <person name="Reich C.I."/>
            <person name="McNeil L.K."/>
            <person name="Badger J.H."/>
            <person name="Glodek A."/>
            <person name="Zhou L."/>
            <person name="Overbeek R."/>
            <person name="Gocayne J.D."/>
            <person name="Weidman J.F."/>
            <person name="McDonald L.A."/>
            <person name="Utterback T.R."/>
            <person name="Cotton M.D."/>
            <person name="Spriggs T."/>
            <person name="Artiach P."/>
            <person name="Kaine B.P."/>
            <person name="Sykes S.M."/>
            <person name="Sadow P.W."/>
            <person name="D'Andrea K.P."/>
            <person name="Bowman C."/>
            <person name="Fujii C."/>
            <person name="Garland S.A."/>
            <person name="Mason T.M."/>
            <person name="Olsen G.J."/>
            <person name="Fraser C.M."/>
            <person name="Smith H.O."/>
            <person name="Woese C.R."/>
            <person name="Venter J.C."/>
        </authorList>
    </citation>
    <scope>NUCLEOTIDE SEQUENCE [LARGE SCALE GENOMIC DNA]</scope>
    <source>
        <strain>ATCC 49558 / DSM 4304 / JCM 9628 / NBRC 100126 / VC-16</strain>
    </source>
</reference>
<reference evidence="4" key="2">
    <citation type="journal article" date="2011" name="Nucleic Acids Res.">
        <title>Structural insight into the functional mechanism of Nep1/Emg1 N1-specific pseudouridine methyltransferase in ribosome biogenesis.</title>
        <authorList>
            <person name="Thomas S.R."/>
            <person name="Keller C.A."/>
            <person name="Szyk A."/>
            <person name="Cannon J.R."/>
            <person name="Laronde-Leblanc N.A."/>
        </authorList>
    </citation>
    <scope>X-RAY CRYSTALLOGRAPHY (1.45 ANGSTROMS) IN COMPLEX WITH S-ADENOSYL-L-HOMOCYSTEINE</scope>
</reference>
<feature type="chain" id="PRO_0000158615" description="Ribosomal RNA small subunit methyltransferase Nep1">
    <location>
        <begin position="1"/>
        <end position="219"/>
    </location>
</feature>
<feature type="binding site" evidence="3 4">
    <location>
        <position position="147"/>
    </location>
    <ligand>
        <name>S-adenosyl-L-methionine</name>
        <dbReference type="ChEBI" id="CHEBI:59789"/>
    </ligand>
</feature>
<feature type="binding site" evidence="1 3 4">
    <location>
        <position position="169"/>
    </location>
    <ligand>
        <name>S-adenosyl-L-methionine</name>
        <dbReference type="ChEBI" id="CHEBI:59789"/>
    </ligand>
</feature>
<feature type="binding site" evidence="1 3 4">
    <location>
        <position position="174"/>
    </location>
    <ligand>
        <name>S-adenosyl-L-methionine</name>
        <dbReference type="ChEBI" id="CHEBI:59789"/>
    </ligand>
</feature>
<feature type="binding site" evidence="1 3 4">
    <location>
        <begin position="192"/>
        <end position="197"/>
    </location>
    <ligand>
        <name>S-adenosyl-L-methionine</name>
        <dbReference type="ChEBI" id="CHEBI:59789"/>
    </ligand>
</feature>
<feature type="site" description="Interaction with substrate rRNA" evidence="1">
    <location>
        <position position="61"/>
    </location>
</feature>
<feature type="site" description="Stabilizes Arg-61" evidence="1">
    <location>
        <position position="63"/>
    </location>
</feature>
<feature type="site" description="Interaction with substrate rRNA" evidence="1">
    <location>
        <position position="99"/>
    </location>
</feature>
<feature type="site" description="Interaction with substrate rRNA" evidence="1">
    <location>
        <position position="102"/>
    </location>
</feature>
<feature type="site" description="Interaction with substrate rRNA" evidence="1">
    <location>
        <position position="106"/>
    </location>
</feature>
<feature type="strand" evidence="5">
    <location>
        <begin position="3"/>
        <end position="11"/>
    </location>
</feature>
<feature type="helix" evidence="5">
    <location>
        <begin position="17"/>
        <end position="19"/>
    </location>
</feature>
<feature type="helix" evidence="5">
    <location>
        <begin position="23"/>
        <end position="32"/>
    </location>
</feature>
<feature type="helix" evidence="5">
    <location>
        <begin position="36"/>
        <end position="38"/>
    </location>
</feature>
<feature type="helix" evidence="5">
    <location>
        <begin position="43"/>
        <end position="46"/>
    </location>
</feature>
<feature type="helix" evidence="5">
    <location>
        <begin position="47"/>
        <end position="49"/>
    </location>
</feature>
<feature type="helix" evidence="5">
    <location>
        <begin position="56"/>
        <end position="58"/>
    </location>
</feature>
<feature type="helix" evidence="5">
    <location>
        <begin position="63"/>
        <end position="73"/>
    </location>
</feature>
<feature type="strand" evidence="5">
    <location>
        <begin position="79"/>
        <end position="86"/>
    </location>
</feature>
<feature type="strand" evidence="5">
    <location>
        <begin position="91"/>
        <end position="94"/>
    </location>
</feature>
<feature type="helix" evidence="5">
    <location>
        <begin position="104"/>
        <end position="117"/>
    </location>
</feature>
<feature type="strand" evidence="5">
    <location>
        <begin position="118"/>
        <end position="122"/>
    </location>
</feature>
<feature type="strand" evidence="5">
    <location>
        <begin position="125"/>
        <end position="133"/>
    </location>
</feature>
<feature type="helix" evidence="5">
    <location>
        <begin position="135"/>
        <end position="138"/>
    </location>
</feature>
<feature type="turn" evidence="5">
    <location>
        <begin position="139"/>
        <end position="141"/>
    </location>
</feature>
<feature type="strand" evidence="5">
    <location>
        <begin position="142"/>
        <end position="147"/>
    </location>
</feature>
<feature type="helix" evidence="5">
    <location>
        <begin position="156"/>
        <end position="159"/>
    </location>
</feature>
<feature type="strand" evidence="5">
    <location>
        <begin position="161"/>
        <end position="169"/>
    </location>
</feature>
<feature type="strand" evidence="5">
    <location>
        <begin position="171"/>
        <end position="174"/>
    </location>
</feature>
<feature type="helix" evidence="5">
    <location>
        <begin position="178"/>
        <end position="184"/>
    </location>
</feature>
<feature type="strand" evidence="5">
    <location>
        <begin position="186"/>
        <end position="190"/>
    </location>
</feature>
<feature type="helix" evidence="5">
    <location>
        <begin position="199"/>
        <end position="214"/>
    </location>
</feature>
<organism>
    <name type="scientific">Archaeoglobus fulgidus (strain ATCC 49558 / DSM 4304 / JCM 9628 / NBRC 100126 / VC-16)</name>
    <dbReference type="NCBI Taxonomy" id="224325"/>
    <lineage>
        <taxon>Archaea</taxon>
        <taxon>Methanobacteriati</taxon>
        <taxon>Methanobacteriota</taxon>
        <taxon>Archaeoglobi</taxon>
        <taxon>Archaeoglobales</taxon>
        <taxon>Archaeoglobaceae</taxon>
        <taxon>Archaeoglobus</taxon>
    </lineage>
</organism>
<protein>
    <recommendedName>
        <fullName evidence="1">Ribosomal RNA small subunit methyltransferase Nep1</fullName>
        <ecNumber evidence="1">2.1.1.-</ecNumber>
    </recommendedName>
    <alternativeName>
        <fullName evidence="1">16S rRNA (pseudouridine-N1-)-methyltransferase Nep1</fullName>
    </alternativeName>
</protein>
<evidence type="ECO:0000255" key="1">
    <source>
        <dbReference type="HAMAP-Rule" id="MF_00554"/>
    </source>
</evidence>
<evidence type="ECO:0000305" key="2"/>
<evidence type="ECO:0000305" key="3">
    <source>
    </source>
</evidence>
<evidence type="ECO:0007744" key="4">
    <source>
        <dbReference type="PDB" id="3O7B"/>
    </source>
</evidence>
<evidence type="ECO:0007829" key="5">
    <source>
        <dbReference type="PDB" id="3O7B"/>
    </source>
</evidence>
<name>NEP1_ARCFU</name>
<proteinExistence type="evidence at protein level"/>
<accession>O29524</accession>
<dbReference type="EC" id="2.1.1.-" evidence="1"/>
<dbReference type="EMBL" id="AE000782">
    <property type="protein sequence ID" value="AAB90504.1"/>
    <property type="molecule type" value="Genomic_DNA"/>
</dbReference>
<dbReference type="PIR" id="F69341">
    <property type="entry name" value="F69341"/>
</dbReference>
<dbReference type="RefSeq" id="WP_010878237.1">
    <property type="nucleotide sequence ID" value="NC_000917.1"/>
</dbReference>
<dbReference type="PDB" id="3O7B">
    <property type="method" value="X-ray"/>
    <property type="resolution" value="1.45 A"/>
    <property type="chains" value="A=1-219"/>
</dbReference>
<dbReference type="PDBsum" id="3O7B"/>
<dbReference type="SMR" id="O29524"/>
<dbReference type="STRING" id="224325.AF_0734"/>
<dbReference type="PaxDb" id="224325-AF_0734"/>
<dbReference type="EnsemblBacteria" id="AAB90504">
    <property type="protein sequence ID" value="AAB90504"/>
    <property type="gene ID" value="AF_0734"/>
</dbReference>
<dbReference type="GeneID" id="24794332"/>
<dbReference type="KEGG" id="afu:AF_0734"/>
<dbReference type="eggNOG" id="arCOG04122">
    <property type="taxonomic scope" value="Archaea"/>
</dbReference>
<dbReference type="HOGENOM" id="CLU_055846_1_3_2"/>
<dbReference type="OrthoDB" id="7612at2157"/>
<dbReference type="PhylomeDB" id="O29524"/>
<dbReference type="BRENDA" id="2.1.1.260">
    <property type="organism ID" value="414"/>
</dbReference>
<dbReference type="EvolutionaryTrace" id="O29524"/>
<dbReference type="Proteomes" id="UP000002199">
    <property type="component" value="Chromosome"/>
</dbReference>
<dbReference type="GO" id="GO:0070037">
    <property type="term" value="F:rRNA (pseudouridine) methyltransferase activity"/>
    <property type="evidence" value="ECO:0007669"/>
    <property type="project" value="UniProtKB-UniRule"/>
</dbReference>
<dbReference type="GO" id="GO:0019843">
    <property type="term" value="F:rRNA binding"/>
    <property type="evidence" value="ECO:0007669"/>
    <property type="project" value="UniProtKB-UniRule"/>
</dbReference>
<dbReference type="GO" id="GO:0070475">
    <property type="term" value="P:rRNA base methylation"/>
    <property type="evidence" value="ECO:0007669"/>
    <property type="project" value="InterPro"/>
</dbReference>
<dbReference type="CDD" id="cd18088">
    <property type="entry name" value="Nep1-like"/>
    <property type="match status" value="1"/>
</dbReference>
<dbReference type="Gene3D" id="3.40.1280.10">
    <property type="match status" value="1"/>
</dbReference>
<dbReference type="HAMAP" id="MF_00554">
    <property type="entry name" value="NEP1"/>
    <property type="match status" value="1"/>
</dbReference>
<dbReference type="InterPro" id="IPR029028">
    <property type="entry name" value="Alpha/beta_knot_MTases"/>
</dbReference>
<dbReference type="InterPro" id="IPR005304">
    <property type="entry name" value="Rbsml_bgen_MeTrfase_EMG1/NEP1"/>
</dbReference>
<dbReference type="InterPro" id="IPR023503">
    <property type="entry name" value="Ribosome_NEP1_arc"/>
</dbReference>
<dbReference type="InterPro" id="IPR029026">
    <property type="entry name" value="tRNA_m1G_MTases_N"/>
</dbReference>
<dbReference type="NCBIfam" id="NF003209">
    <property type="entry name" value="PRK04171.2-4"/>
    <property type="match status" value="1"/>
</dbReference>
<dbReference type="PANTHER" id="PTHR12636">
    <property type="entry name" value="NEP1/MRA1"/>
    <property type="match status" value="1"/>
</dbReference>
<dbReference type="PANTHER" id="PTHR12636:SF5">
    <property type="entry name" value="RIBOSOMAL RNA SMALL SUBUNIT METHYLTRANSFERASE NEP1"/>
    <property type="match status" value="1"/>
</dbReference>
<dbReference type="Pfam" id="PF03587">
    <property type="entry name" value="EMG1"/>
    <property type="match status" value="1"/>
</dbReference>
<dbReference type="SUPFAM" id="SSF75217">
    <property type="entry name" value="alpha/beta knot"/>
    <property type="match status" value="1"/>
</dbReference>